<comment type="function">
    <text evidence="1">Receptor for MSH (alpha, beta and gamma) and ACTH. The activity of this receptor is mediated by G proteins which activate adenylate cyclase. Mediates melanogenesis, the production of eumelanin (black/brown) and phaeomelanin (red/yellow), via regulation of cAMP signaling in melanocytes.</text>
</comment>
<comment type="subunit">
    <text evidence="1">Interacts with MGRN1, but does not undergo MGRN1-mediated ubiquitination; this interaction competes with GNAS-binding and thus inhibits agonist-induced cAMP production. Interacts with OPN3; the interaction results in a decrease in MC1R-mediated cAMP signaling and ultimately a decrease in melanin production in melanocytes.</text>
</comment>
<comment type="subcellular location">
    <subcellularLocation>
        <location evidence="1">Cell membrane</location>
        <topology evidence="2">Multi-pass membrane protein</topology>
    </subcellularLocation>
</comment>
<comment type="similarity">
    <text evidence="3">Belongs to the G-protein coupled receptor 1 family.</text>
</comment>
<keyword id="KW-1003">Cell membrane</keyword>
<keyword id="KW-0297">G-protein coupled receptor</keyword>
<keyword id="KW-0325">Glycoprotein</keyword>
<keyword id="KW-0449">Lipoprotein</keyword>
<keyword id="KW-0472">Membrane</keyword>
<keyword id="KW-0564">Palmitate</keyword>
<keyword id="KW-0675">Receptor</keyword>
<keyword id="KW-0807">Transducer</keyword>
<keyword id="KW-0812">Transmembrane</keyword>
<keyword id="KW-1133">Transmembrane helix</keyword>
<feature type="chain" id="PRO_0000069788" description="Melanocyte-stimulating hormone receptor">
    <location>
        <begin position="1"/>
        <end position="317"/>
    </location>
</feature>
<feature type="topological domain" description="Extracellular" evidence="2">
    <location>
        <begin position="1"/>
        <end position="37"/>
    </location>
</feature>
<feature type="transmembrane region" description="Helical; Name=1" evidence="2">
    <location>
        <begin position="38"/>
        <end position="63"/>
    </location>
</feature>
<feature type="topological domain" description="Cytoplasmic" evidence="2">
    <location>
        <begin position="64"/>
        <end position="72"/>
    </location>
</feature>
<feature type="transmembrane region" description="Helical; Name=2" evidence="2">
    <location>
        <begin position="73"/>
        <end position="93"/>
    </location>
</feature>
<feature type="topological domain" description="Extracellular" evidence="2">
    <location>
        <begin position="94"/>
        <end position="118"/>
    </location>
</feature>
<feature type="transmembrane region" description="Helical; Name=3" evidence="2">
    <location>
        <begin position="119"/>
        <end position="140"/>
    </location>
</feature>
<feature type="topological domain" description="Cytoplasmic" evidence="2">
    <location>
        <begin position="141"/>
        <end position="163"/>
    </location>
</feature>
<feature type="transmembrane region" description="Helical; Name=4" evidence="2">
    <location>
        <begin position="164"/>
        <end position="183"/>
    </location>
</feature>
<feature type="topological domain" description="Extracellular" evidence="2">
    <location>
        <begin position="184"/>
        <end position="191"/>
    </location>
</feature>
<feature type="transmembrane region" description="Helical; Name=5" evidence="2">
    <location>
        <begin position="192"/>
        <end position="211"/>
    </location>
</feature>
<feature type="topological domain" description="Cytoplasmic" evidence="2">
    <location>
        <begin position="212"/>
        <end position="240"/>
    </location>
</feature>
<feature type="transmembrane region" description="Helical; Name=6" evidence="2">
    <location>
        <begin position="241"/>
        <end position="266"/>
    </location>
</feature>
<feature type="topological domain" description="Extracellular" evidence="2">
    <location>
        <begin position="267"/>
        <end position="279"/>
    </location>
</feature>
<feature type="transmembrane region" description="Helical; Name=7" evidence="2">
    <location>
        <begin position="280"/>
        <end position="300"/>
    </location>
</feature>
<feature type="topological domain" description="Cytoplasmic" evidence="2">
    <location>
        <begin position="301"/>
        <end position="317"/>
    </location>
</feature>
<feature type="lipid moiety-binding region" description="S-palmitoyl cysteine" evidence="2">
    <location>
        <position position="315"/>
    </location>
</feature>
<feature type="glycosylation site" description="N-linked (GlcNAc...) asparagine" evidence="2">
    <location>
        <position position="29"/>
    </location>
</feature>
<name>MSHR_ALOPA</name>
<evidence type="ECO:0000250" key="1">
    <source>
        <dbReference type="UniProtKB" id="Q01726"/>
    </source>
</evidence>
<evidence type="ECO:0000255" key="2"/>
<evidence type="ECO:0000255" key="3">
    <source>
        <dbReference type="PROSITE-ProRule" id="PRU00521"/>
    </source>
</evidence>
<reference key="1">
    <citation type="journal article" date="2003" name="Am. J. Phys. Anthropol.">
        <title>Evolution of a pigmentation gene, the melanocortin-1 receptor, in primates.</title>
        <authorList>
            <person name="Mundy N.I."/>
            <person name="Kelly J."/>
        </authorList>
    </citation>
    <scope>NUCLEOTIDE SEQUENCE [GENOMIC DNA]</scope>
    <source>
        <strain>Isolate 1</strain>
    </source>
</reference>
<organism>
    <name type="scientific">Alouatta palliata</name>
    <name type="common">Mantled howler monkey</name>
    <dbReference type="NCBI Taxonomy" id="30589"/>
    <lineage>
        <taxon>Eukaryota</taxon>
        <taxon>Metazoa</taxon>
        <taxon>Chordata</taxon>
        <taxon>Craniata</taxon>
        <taxon>Vertebrata</taxon>
        <taxon>Euteleostomi</taxon>
        <taxon>Mammalia</taxon>
        <taxon>Eutheria</taxon>
        <taxon>Euarchontoglires</taxon>
        <taxon>Primates</taxon>
        <taxon>Haplorrhini</taxon>
        <taxon>Platyrrhini</taxon>
        <taxon>Atelidae</taxon>
        <taxon>Alouattinae</taxon>
        <taxon>Alouatta</taxon>
    </lineage>
</organism>
<proteinExistence type="inferred from homology"/>
<gene>
    <name type="primary">MC1R</name>
</gene>
<sequence length="317" mass="34671">MPMQGAQRRLLGSLNSTPTATPNLGLAANHTGAPCLEVSIPDGLFLSLGLVSLVENVLVVAAIAKNRNLHSPMYCFICCLALSDLLVSGSNMLETAVILLLEAGALATRASVVQQLQNTIDVLTCSSMLCSLCFLGAIAVDRYVSIFYALRYHSIVTLPRARRAIAAIWVASVLSSTLFIAYCDHAAVLLCLVVFFLAMLVLMAVLYVHMLARACQHAQGITRLHKRQLPAHQGFGLRGAATLTILLGIFFLCWGPFFLHLMLVVLCPQHLTCSCIFKNFKVFLTLIICNTIIDPLIYAFRSQELCRTLKEVLLCSW</sequence>
<dbReference type="EMBL" id="AY205135">
    <property type="protein sequence ID" value="AAP31009.1"/>
    <property type="molecule type" value="Genomic_DNA"/>
</dbReference>
<dbReference type="SMR" id="Q864G2"/>
<dbReference type="GlyCosmos" id="Q864G2">
    <property type="glycosylation" value="1 site, No reported glycans"/>
</dbReference>
<dbReference type="GO" id="GO:0005886">
    <property type="term" value="C:plasma membrane"/>
    <property type="evidence" value="ECO:0000250"/>
    <property type="project" value="UniProtKB"/>
</dbReference>
<dbReference type="GO" id="GO:0004980">
    <property type="term" value="F:melanocyte-stimulating hormone receptor activity"/>
    <property type="evidence" value="ECO:0007669"/>
    <property type="project" value="InterPro"/>
</dbReference>
<dbReference type="GO" id="GO:0007189">
    <property type="term" value="P:adenylate cyclase-activating G protein-coupled receptor signaling pathway"/>
    <property type="evidence" value="ECO:0007669"/>
    <property type="project" value="UniProtKB-ARBA"/>
</dbReference>
<dbReference type="FunFam" id="1.20.1070.10:FF:000211">
    <property type="entry name" value="Melanocyte-stimulating hormone receptor"/>
    <property type="match status" value="1"/>
</dbReference>
<dbReference type="Gene3D" id="1.20.1070.10">
    <property type="entry name" value="Rhodopsin 7-helix transmembrane proteins"/>
    <property type="match status" value="1"/>
</dbReference>
<dbReference type="InterPro" id="IPR000276">
    <property type="entry name" value="GPCR_Rhodpsn"/>
</dbReference>
<dbReference type="InterPro" id="IPR017452">
    <property type="entry name" value="GPCR_Rhodpsn_7TM"/>
</dbReference>
<dbReference type="InterPro" id="IPR001671">
    <property type="entry name" value="Melcrt_ACTH_rcpt"/>
</dbReference>
<dbReference type="InterPro" id="IPR000761">
    <property type="entry name" value="MSH_rcpt"/>
</dbReference>
<dbReference type="PANTHER" id="PTHR22750">
    <property type="entry name" value="G-PROTEIN COUPLED RECEPTOR"/>
    <property type="match status" value="1"/>
</dbReference>
<dbReference type="Pfam" id="PF00001">
    <property type="entry name" value="7tm_1"/>
    <property type="match status" value="2"/>
</dbReference>
<dbReference type="PRINTS" id="PR00237">
    <property type="entry name" value="GPCRRHODOPSN"/>
</dbReference>
<dbReference type="PRINTS" id="PR00534">
    <property type="entry name" value="MCRFAMILY"/>
</dbReference>
<dbReference type="PRINTS" id="PR00536">
    <property type="entry name" value="MELNOCYTESHR"/>
</dbReference>
<dbReference type="SMART" id="SM01381">
    <property type="entry name" value="7TM_GPCR_Srsx"/>
    <property type="match status" value="1"/>
</dbReference>
<dbReference type="SUPFAM" id="SSF81321">
    <property type="entry name" value="Family A G protein-coupled receptor-like"/>
    <property type="match status" value="1"/>
</dbReference>
<dbReference type="PROSITE" id="PS00237">
    <property type="entry name" value="G_PROTEIN_RECEP_F1_1"/>
    <property type="match status" value="1"/>
</dbReference>
<dbReference type="PROSITE" id="PS50262">
    <property type="entry name" value="G_PROTEIN_RECEP_F1_2"/>
    <property type="match status" value="1"/>
</dbReference>
<accession>Q864G2</accession>
<protein>
    <recommendedName>
        <fullName>Melanocyte-stimulating hormone receptor</fullName>
        <shortName>MSH-R</shortName>
    </recommendedName>
    <alternativeName>
        <fullName>Melanocortin receptor 1</fullName>
        <shortName>MC1-R</shortName>
    </alternativeName>
</protein>